<sequence>MLFDQIASNKRKTWILLLVFFLLLALVGYAVGYLFIRSGLGGLVIALIIGFIYALSMIFQSTEIVMSMNGAREVDEQTAPDLYHVVEDMALVAQIPMPRVFIIDDPALNAFATGSNPQNAAVAATSGLLAIMNREELEAVMGHEVSHIRNYDIRISTIAVALASAITMLSGMAGRMMWWGGAGRRRSDDDRDGNGLEIIMLVVSLLAIVLAPLAATLVQLAISRQREFLADASSVELTRNPQGMINALDKLDNSKPMSRHVDDASSALYINDPKKGGGFQKLFYTHPPISERIERLKQM</sequence>
<accession>C1CL18</accession>
<keyword id="KW-1003">Cell membrane</keyword>
<keyword id="KW-0378">Hydrolase</keyword>
<keyword id="KW-0472">Membrane</keyword>
<keyword id="KW-0479">Metal-binding</keyword>
<keyword id="KW-0482">Metalloprotease</keyword>
<keyword id="KW-0645">Protease</keyword>
<keyword id="KW-0812">Transmembrane</keyword>
<keyword id="KW-1133">Transmembrane helix</keyword>
<keyword id="KW-0862">Zinc</keyword>
<organism>
    <name type="scientific">Streptococcus pneumoniae (strain P1031)</name>
    <dbReference type="NCBI Taxonomy" id="488223"/>
    <lineage>
        <taxon>Bacteria</taxon>
        <taxon>Bacillati</taxon>
        <taxon>Bacillota</taxon>
        <taxon>Bacilli</taxon>
        <taxon>Lactobacillales</taxon>
        <taxon>Streptococcaceae</taxon>
        <taxon>Streptococcus</taxon>
    </lineage>
</organism>
<name>HTPX_STRZP</name>
<evidence type="ECO:0000255" key="1">
    <source>
        <dbReference type="HAMAP-Rule" id="MF_00188"/>
    </source>
</evidence>
<feature type="chain" id="PRO_1000192749" description="Protease HtpX homolog">
    <location>
        <begin position="1"/>
        <end position="299"/>
    </location>
</feature>
<feature type="transmembrane region" description="Helical" evidence="1">
    <location>
        <begin position="15"/>
        <end position="35"/>
    </location>
</feature>
<feature type="transmembrane region" description="Helical" evidence="1">
    <location>
        <begin position="39"/>
        <end position="59"/>
    </location>
</feature>
<feature type="transmembrane region" description="Helical" evidence="1">
    <location>
        <begin position="158"/>
        <end position="178"/>
    </location>
</feature>
<feature type="transmembrane region" description="Helical" evidence="1">
    <location>
        <begin position="198"/>
        <end position="218"/>
    </location>
</feature>
<feature type="active site" evidence="1">
    <location>
        <position position="144"/>
    </location>
</feature>
<feature type="binding site" evidence="1">
    <location>
        <position position="143"/>
    </location>
    <ligand>
        <name>Zn(2+)</name>
        <dbReference type="ChEBI" id="CHEBI:29105"/>
        <note>catalytic</note>
    </ligand>
</feature>
<feature type="binding site" evidence="1">
    <location>
        <position position="147"/>
    </location>
    <ligand>
        <name>Zn(2+)</name>
        <dbReference type="ChEBI" id="CHEBI:29105"/>
        <note>catalytic</note>
    </ligand>
</feature>
<feature type="binding site" evidence="1">
    <location>
        <position position="227"/>
    </location>
    <ligand>
        <name>Zn(2+)</name>
        <dbReference type="ChEBI" id="CHEBI:29105"/>
        <note>catalytic</note>
    </ligand>
</feature>
<reference key="1">
    <citation type="journal article" date="2010" name="Genome Biol.">
        <title>Structure and dynamics of the pan-genome of Streptococcus pneumoniae and closely related species.</title>
        <authorList>
            <person name="Donati C."/>
            <person name="Hiller N.L."/>
            <person name="Tettelin H."/>
            <person name="Muzzi A."/>
            <person name="Croucher N.J."/>
            <person name="Angiuoli S.V."/>
            <person name="Oggioni M."/>
            <person name="Dunning Hotopp J.C."/>
            <person name="Hu F.Z."/>
            <person name="Riley D.R."/>
            <person name="Covacci A."/>
            <person name="Mitchell T.J."/>
            <person name="Bentley S.D."/>
            <person name="Kilian M."/>
            <person name="Ehrlich G.D."/>
            <person name="Rappuoli R."/>
            <person name="Moxon E.R."/>
            <person name="Masignani V."/>
        </authorList>
    </citation>
    <scope>NUCLEOTIDE SEQUENCE [LARGE SCALE GENOMIC DNA]</scope>
    <source>
        <strain>P1031</strain>
    </source>
</reference>
<comment type="cofactor">
    <cofactor evidence="1">
        <name>Zn(2+)</name>
        <dbReference type="ChEBI" id="CHEBI:29105"/>
    </cofactor>
    <text evidence="1">Binds 1 zinc ion per subunit.</text>
</comment>
<comment type="subcellular location">
    <subcellularLocation>
        <location evidence="1">Cell membrane</location>
        <topology evidence="1">Multi-pass membrane protein</topology>
    </subcellularLocation>
</comment>
<comment type="similarity">
    <text evidence="1">Belongs to the peptidase M48B family.</text>
</comment>
<protein>
    <recommendedName>
        <fullName evidence="1">Protease HtpX homolog</fullName>
        <ecNumber evidence="1">3.4.24.-</ecNumber>
    </recommendedName>
</protein>
<dbReference type="EC" id="3.4.24.-" evidence="1"/>
<dbReference type="EMBL" id="CP000920">
    <property type="protein sequence ID" value="ACO21521.1"/>
    <property type="molecule type" value="Genomic_DNA"/>
</dbReference>
<dbReference type="RefSeq" id="WP_000895728.1">
    <property type="nucleotide sequence ID" value="NC_012467.1"/>
</dbReference>
<dbReference type="KEGG" id="spp:SPP_1322"/>
<dbReference type="HOGENOM" id="CLU_042266_2_1_9"/>
<dbReference type="GO" id="GO:0005886">
    <property type="term" value="C:plasma membrane"/>
    <property type="evidence" value="ECO:0007669"/>
    <property type="project" value="UniProtKB-SubCell"/>
</dbReference>
<dbReference type="GO" id="GO:0004222">
    <property type="term" value="F:metalloendopeptidase activity"/>
    <property type="evidence" value="ECO:0007669"/>
    <property type="project" value="UniProtKB-UniRule"/>
</dbReference>
<dbReference type="GO" id="GO:0008270">
    <property type="term" value="F:zinc ion binding"/>
    <property type="evidence" value="ECO:0007669"/>
    <property type="project" value="UniProtKB-UniRule"/>
</dbReference>
<dbReference type="GO" id="GO:0006508">
    <property type="term" value="P:proteolysis"/>
    <property type="evidence" value="ECO:0007669"/>
    <property type="project" value="UniProtKB-KW"/>
</dbReference>
<dbReference type="CDD" id="cd07340">
    <property type="entry name" value="M48B_Htpx_like"/>
    <property type="match status" value="1"/>
</dbReference>
<dbReference type="Gene3D" id="3.30.2010.10">
    <property type="entry name" value="Metalloproteases ('zincins'), catalytic domain"/>
    <property type="match status" value="1"/>
</dbReference>
<dbReference type="HAMAP" id="MF_00188">
    <property type="entry name" value="Pept_M48_protease_HtpX"/>
    <property type="match status" value="1"/>
</dbReference>
<dbReference type="InterPro" id="IPR050083">
    <property type="entry name" value="HtpX_protease"/>
</dbReference>
<dbReference type="InterPro" id="IPR022919">
    <property type="entry name" value="Pept_M48_protease_HtpX"/>
</dbReference>
<dbReference type="InterPro" id="IPR001915">
    <property type="entry name" value="Peptidase_M48"/>
</dbReference>
<dbReference type="NCBIfam" id="NF003425">
    <property type="entry name" value="PRK04897.1"/>
    <property type="match status" value="1"/>
</dbReference>
<dbReference type="PANTHER" id="PTHR43221">
    <property type="entry name" value="PROTEASE HTPX"/>
    <property type="match status" value="1"/>
</dbReference>
<dbReference type="PANTHER" id="PTHR43221:SF1">
    <property type="entry name" value="PROTEASE HTPX"/>
    <property type="match status" value="1"/>
</dbReference>
<dbReference type="Pfam" id="PF01435">
    <property type="entry name" value="Peptidase_M48"/>
    <property type="match status" value="1"/>
</dbReference>
<gene>
    <name evidence="1" type="primary">htpX</name>
    <name type="ordered locus">SPP_1322</name>
</gene>
<proteinExistence type="inferred from homology"/>